<evidence type="ECO:0000305" key="1"/>
<dbReference type="EMBL" id="AF157706">
    <property type="protein sequence ID" value="AAD49639.1"/>
    <property type="molecule type" value="Genomic_DNA"/>
</dbReference>
<dbReference type="PIR" id="T43985">
    <property type="entry name" value="T43985"/>
</dbReference>
<dbReference type="RefSeq" id="NP_050206.1">
    <property type="nucleotide sequence ID" value="NC_000898.1"/>
</dbReference>
<dbReference type="GeneID" id="1497027"/>
<dbReference type="KEGG" id="vg:1497027"/>
<dbReference type="Proteomes" id="UP000006930">
    <property type="component" value="Segment"/>
</dbReference>
<dbReference type="InterPro" id="IPR003360">
    <property type="entry name" value="US22-like"/>
</dbReference>
<dbReference type="Pfam" id="PF02393">
    <property type="entry name" value="US22"/>
    <property type="match status" value="2"/>
</dbReference>
<organismHost>
    <name type="scientific">Homo sapiens</name>
    <name type="common">Human</name>
    <dbReference type="NCBI Taxonomy" id="9606"/>
</organismHost>
<organism>
    <name type="scientific">Human herpesvirus 6B (strain Z29)</name>
    <name type="common">HHV-6 variant B</name>
    <name type="synonym">Human B lymphotropic virus</name>
    <dbReference type="NCBI Taxonomy" id="36351"/>
    <lineage>
        <taxon>Viruses</taxon>
        <taxon>Duplodnaviria</taxon>
        <taxon>Heunggongvirae</taxon>
        <taxon>Peploviricota</taxon>
        <taxon>Herviviricetes</taxon>
        <taxon>Herpesvirales</taxon>
        <taxon>Orthoherpesviridae</taxon>
        <taxon>Betaherpesvirinae</taxon>
        <taxon>Roseolovirus</taxon>
        <taxon>Roseolovirus humanbeta6b</taxon>
        <taxon>Human herpesvirus 6B</taxon>
    </lineage>
</organism>
<reference key="1">
    <citation type="journal article" date="1999" name="J. Virol.">
        <title>Human herpesvirus 6B genome sequence: coding content and comparison with human herpesvirus 6A.</title>
        <authorList>
            <person name="Dominguez G."/>
            <person name="Dambaugh T.R."/>
            <person name="Stamey F.R."/>
            <person name="Dewhurst S."/>
            <person name="Inoue N."/>
            <person name="Pellett P.E."/>
        </authorList>
    </citation>
    <scope>NUCLEOTIDE SEQUENCE [LARGE SCALE GENOMIC DNA]</scope>
</reference>
<accession>P0DXM7</accession>
<accession>Q77PV2</accession>
<accession>Q9WT39</accession>
<protein>
    <recommendedName>
        <fullName>Protein U25</fullName>
    </recommendedName>
</protein>
<name>VU25_HHV6Z</name>
<keyword id="KW-1185">Reference proteome</keyword>
<proteinExistence type="inferred from homology"/>
<sequence length="316" mass="37054">MGLSSSKDIDLLVNFIENRQGATLALPWPEDYRLTLHSVENIPDISREDVQNWAKTYMCCEGELVVVGVIHKAKTRTCRGPIVLQGARGHIYVYNGFFDRSLYHVASSFHDLFSNGLRFFYPIYETCDYALDSTVALDMIAHSKSFSELLHYRNERKNAFFTLKTYPYKTFVRFCNLSMTGFSSKHLIQWRRKLQTSLLDVVFIVQHNFFGDWRELVVVFDGHGMLFCVDREESLLFIARNMSDFLKIGCLRYNENRRLHTQWFTQDTDYIKQVDEMFSRDVLCPLREHCQRSRRDRGLLKICTSLVRGINCIERG</sequence>
<gene>
    <name type="primary">U25</name>
</gene>
<feature type="chain" id="PRO_0000408451" description="Protein U25">
    <location>
        <begin position="1"/>
        <end position="316"/>
    </location>
</feature>
<comment type="similarity">
    <text evidence="1">Belongs to the herpesviridae US22 family.</text>
</comment>